<gene>
    <name evidence="1" type="primary">smpB</name>
    <name type="ordered locus">MYCGA4430</name>
    <name type="ORF">MGA_0102</name>
</gene>
<keyword id="KW-0963">Cytoplasm</keyword>
<keyword id="KW-1185">Reference proteome</keyword>
<keyword id="KW-0694">RNA-binding</keyword>
<organism>
    <name type="scientific">Mycoplasmoides gallisepticum (strain R(low / passage 15 / clone 2))</name>
    <name type="common">Mycoplasma gallisepticum</name>
    <dbReference type="NCBI Taxonomy" id="710127"/>
    <lineage>
        <taxon>Bacteria</taxon>
        <taxon>Bacillati</taxon>
        <taxon>Mycoplasmatota</taxon>
        <taxon>Mycoplasmoidales</taxon>
        <taxon>Mycoplasmoidaceae</taxon>
        <taxon>Mycoplasmoides</taxon>
    </lineage>
</organism>
<proteinExistence type="inferred from homology"/>
<name>SSRP_MYCGA</name>
<feature type="chain" id="PRO_0000102981" description="SsrA-binding protein">
    <location>
        <begin position="1"/>
        <end position="143"/>
    </location>
</feature>
<sequence length="143" mass="17091">MRLLVNNKKAKYNYELLDKYEAGISLSGNEVKSLALHHGKLDDSYVIIRKNEAYLLNLLIPKYKFDTSKVLNETRTRKLLLHKSEILKIDLIKKQHSLVIIPYQIYFVNNKIKVSIYLARPKKRYDKRQTIKEREINKKIRKY</sequence>
<comment type="function">
    <text evidence="1">Required for rescue of stalled ribosomes mediated by trans-translation. Binds to transfer-messenger RNA (tmRNA), required for stable association of tmRNA with ribosomes. tmRNA and SmpB together mimic tRNA shape, replacing the anticodon stem-loop with SmpB. tmRNA is encoded by the ssrA gene; the 2 termini fold to resemble tRNA(Ala) and it encodes a 'tag peptide', a short internal open reading frame. During trans-translation Ala-aminoacylated tmRNA acts like a tRNA, entering the A-site of stalled ribosomes, displacing the stalled mRNA. The ribosome then switches to translate the ORF on the tmRNA; the nascent peptide is terminated with the 'tag peptide' encoded by the tmRNA and targeted for degradation. The ribosome is freed to recommence translation, which seems to be the essential function of trans-translation.</text>
</comment>
<comment type="subcellular location">
    <subcellularLocation>
        <location evidence="1">Cytoplasm</location>
    </subcellularLocation>
    <text evidence="1">The tmRNA-SmpB complex associates with stalled 70S ribosomes.</text>
</comment>
<comment type="similarity">
    <text evidence="1">Belongs to the SmpB family.</text>
</comment>
<dbReference type="EMBL" id="AE015450">
    <property type="protein sequence ID" value="AAP56793.2"/>
    <property type="molecule type" value="Genomic_DNA"/>
</dbReference>
<dbReference type="RefSeq" id="WP_011113692.1">
    <property type="nucleotide sequence ID" value="NC_004829.2"/>
</dbReference>
<dbReference type="SMR" id="Q7NB37"/>
<dbReference type="GeneID" id="93510272"/>
<dbReference type="KEGG" id="mga:MGA_0102"/>
<dbReference type="HOGENOM" id="CLU_108953_0_1_14"/>
<dbReference type="OrthoDB" id="9805462at2"/>
<dbReference type="Proteomes" id="UP000001418">
    <property type="component" value="Chromosome"/>
</dbReference>
<dbReference type="GO" id="GO:0005829">
    <property type="term" value="C:cytosol"/>
    <property type="evidence" value="ECO:0007669"/>
    <property type="project" value="TreeGrafter"/>
</dbReference>
<dbReference type="GO" id="GO:0003723">
    <property type="term" value="F:RNA binding"/>
    <property type="evidence" value="ECO:0007669"/>
    <property type="project" value="UniProtKB-UniRule"/>
</dbReference>
<dbReference type="GO" id="GO:0070929">
    <property type="term" value="P:trans-translation"/>
    <property type="evidence" value="ECO:0007669"/>
    <property type="project" value="UniProtKB-UniRule"/>
</dbReference>
<dbReference type="CDD" id="cd09294">
    <property type="entry name" value="SmpB"/>
    <property type="match status" value="1"/>
</dbReference>
<dbReference type="Gene3D" id="2.40.280.10">
    <property type="match status" value="1"/>
</dbReference>
<dbReference type="HAMAP" id="MF_00023">
    <property type="entry name" value="SmpB"/>
    <property type="match status" value="1"/>
</dbReference>
<dbReference type="InterPro" id="IPR023620">
    <property type="entry name" value="SmpB"/>
</dbReference>
<dbReference type="InterPro" id="IPR000037">
    <property type="entry name" value="SsrA-bd_prot"/>
</dbReference>
<dbReference type="InterPro" id="IPR020081">
    <property type="entry name" value="SsrA-bd_prot_CS"/>
</dbReference>
<dbReference type="NCBIfam" id="NF003843">
    <property type="entry name" value="PRK05422.1"/>
    <property type="match status" value="1"/>
</dbReference>
<dbReference type="NCBIfam" id="TIGR00086">
    <property type="entry name" value="smpB"/>
    <property type="match status" value="1"/>
</dbReference>
<dbReference type="PANTHER" id="PTHR30308:SF2">
    <property type="entry name" value="SSRA-BINDING PROTEIN"/>
    <property type="match status" value="1"/>
</dbReference>
<dbReference type="PANTHER" id="PTHR30308">
    <property type="entry name" value="TMRNA-BINDING COMPONENT OF TRANS-TRANSLATION TAGGING COMPLEX"/>
    <property type="match status" value="1"/>
</dbReference>
<dbReference type="Pfam" id="PF01668">
    <property type="entry name" value="SmpB"/>
    <property type="match status" value="1"/>
</dbReference>
<dbReference type="SUPFAM" id="SSF74982">
    <property type="entry name" value="Small protein B (SmpB)"/>
    <property type="match status" value="1"/>
</dbReference>
<dbReference type="PROSITE" id="PS01317">
    <property type="entry name" value="SSRP"/>
    <property type="match status" value="1"/>
</dbReference>
<reference key="1">
    <citation type="journal article" date="2003" name="Microbiology">
        <title>The complete genome sequence of the avian pathogen Mycoplasma gallisepticum strain R(low).</title>
        <authorList>
            <person name="Papazisi L."/>
            <person name="Gorton T.S."/>
            <person name="Kutish G."/>
            <person name="Markham P.F."/>
            <person name="Browning G.F."/>
            <person name="Nguyen D.K."/>
            <person name="Swartzell S."/>
            <person name="Madan A."/>
            <person name="Mahairas G."/>
            <person name="Geary S.J."/>
        </authorList>
    </citation>
    <scope>NUCLEOTIDE SEQUENCE [LARGE SCALE GENOMIC DNA]</scope>
    <source>
        <strain>R(low / passage 15 / clone 2)</strain>
    </source>
</reference>
<accession>Q7NB37</accession>
<evidence type="ECO:0000255" key="1">
    <source>
        <dbReference type="HAMAP-Rule" id="MF_00023"/>
    </source>
</evidence>
<protein>
    <recommendedName>
        <fullName evidence="1">SsrA-binding protein</fullName>
    </recommendedName>
    <alternativeName>
        <fullName evidence="1">Small protein B</fullName>
    </alternativeName>
</protein>